<reference key="1">
    <citation type="submission" date="2008-02" db="EMBL/GenBank/DDBJ databases">
        <title>Complete sequence of Haemophilus somnus 2336.</title>
        <authorList>
            <consortium name="US DOE Joint Genome Institute"/>
            <person name="Siddaramappa S."/>
            <person name="Duncan A.J."/>
            <person name="Challacombe J.F."/>
            <person name="Rainey D."/>
            <person name="Gillaspy A.F."/>
            <person name="Carson M."/>
            <person name="Gipson J."/>
            <person name="Gipson M."/>
            <person name="Bruce D."/>
            <person name="Detter J.C."/>
            <person name="Han C.S."/>
            <person name="Land M."/>
            <person name="Tapia R."/>
            <person name="Thompson L.S."/>
            <person name="Orvis J."/>
            <person name="Zaitshik J."/>
            <person name="Barnes G."/>
            <person name="Brettin T.S."/>
            <person name="Dyer D.W."/>
            <person name="Inzana T.J."/>
        </authorList>
    </citation>
    <scope>NUCLEOTIDE SEQUENCE [LARGE SCALE GENOMIC DNA]</scope>
    <source>
        <strain>2336</strain>
    </source>
</reference>
<accession>B0USR9</accession>
<protein>
    <recommendedName>
        <fullName evidence="1">Elongation factor 4</fullName>
        <shortName evidence="1">EF-4</shortName>
        <ecNumber evidence="1">3.6.5.n1</ecNumber>
    </recommendedName>
    <alternativeName>
        <fullName evidence="1">Ribosomal back-translocase LepA</fullName>
    </alternativeName>
</protein>
<evidence type="ECO:0000255" key="1">
    <source>
        <dbReference type="HAMAP-Rule" id="MF_00071"/>
    </source>
</evidence>
<sequence length="598" mass="66290">MKNIRNFSIIAHIDHGKSTLSDRLIQSCGGLSDREMEAQVLDSMDLERERGITIKAQSVTLNYRAKDGETYQLNFIDTPGHVDFSYEVSRSLAACEGALLVVDAGQGVEAQTLANCYTAIEMDLEVVPILNKIDLPAAEPERVAEEIEDIVGIDAIDAVRCSAKTGVGIEDVLEEIVRKIPAPEGDPNAPLQALIIDSWFDNYLGVVSLVRVKNGILRKGDKIKVMSTGQSYNVDRLGIFTPKQVDTTELKTGEVGWLVCAIKDILGAPVGDTLTSHHNPATSVLPGFKKVKPQVYAGLFPISSDDYESFRDALGKLSLNDASLFYEPENSTALGFGFRCGFLGLLHMEIIQERLEREYDLDLITTAPTVVYEVEQTNGEVIYVDSPAKLPPLNNIAEIREPIAECNMLLPQSYLGNVITLCVEKRGVQTNMVYHGNQVALTYEIPMGEVVLDFFDRLKSTSRGYASLDYGFKRFQAADMVRVDIMINGERVDALALIVHKDNAQYRGRELVEKMRELIPRQQFDIAIQAAIGNHIIARSTVKQLRKNVLAKCYGGDVSRKKKLLQKQKEGKKRMKSLGNVEVPQEAFLAILHVGKDK</sequence>
<organism>
    <name type="scientific">Histophilus somni (strain 2336)</name>
    <name type="common">Haemophilus somnus</name>
    <dbReference type="NCBI Taxonomy" id="228400"/>
    <lineage>
        <taxon>Bacteria</taxon>
        <taxon>Pseudomonadati</taxon>
        <taxon>Pseudomonadota</taxon>
        <taxon>Gammaproteobacteria</taxon>
        <taxon>Pasteurellales</taxon>
        <taxon>Pasteurellaceae</taxon>
        <taxon>Histophilus</taxon>
    </lineage>
</organism>
<dbReference type="EC" id="3.6.5.n1" evidence="1"/>
<dbReference type="EMBL" id="CP000947">
    <property type="protein sequence ID" value="ACA32508.1"/>
    <property type="molecule type" value="Genomic_DNA"/>
</dbReference>
<dbReference type="RefSeq" id="WP_011609396.1">
    <property type="nucleotide sequence ID" value="NC_010519.1"/>
</dbReference>
<dbReference type="SMR" id="B0USR9"/>
<dbReference type="STRING" id="228400.HSM_0836"/>
<dbReference type="GeneID" id="31487123"/>
<dbReference type="KEGG" id="hsm:HSM_0836"/>
<dbReference type="HOGENOM" id="CLU_009995_3_3_6"/>
<dbReference type="GO" id="GO:0005886">
    <property type="term" value="C:plasma membrane"/>
    <property type="evidence" value="ECO:0007669"/>
    <property type="project" value="UniProtKB-SubCell"/>
</dbReference>
<dbReference type="GO" id="GO:0005525">
    <property type="term" value="F:GTP binding"/>
    <property type="evidence" value="ECO:0007669"/>
    <property type="project" value="UniProtKB-UniRule"/>
</dbReference>
<dbReference type="GO" id="GO:0003924">
    <property type="term" value="F:GTPase activity"/>
    <property type="evidence" value="ECO:0007669"/>
    <property type="project" value="UniProtKB-UniRule"/>
</dbReference>
<dbReference type="GO" id="GO:0097216">
    <property type="term" value="F:guanosine tetraphosphate binding"/>
    <property type="evidence" value="ECO:0007669"/>
    <property type="project" value="UniProtKB-ARBA"/>
</dbReference>
<dbReference type="GO" id="GO:0043022">
    <property type="term" value="F:ribosome binding"/>
    <property type="evidence" value="ECO:0007669"/>
    <property type="project" value="UniProtKB-UniRule"/>
</dbReference>
<dbReference type="GO" id="GO:0003746">
    <property type="term" value="F:translation elongation factor activity"/>
    <property type="evidence" value="ECO:0007669"/>
    <property type="project" value="UniProtKB-UniRule"/>
</dbReference>
<dbReference type="GO" id="GO:0045727">
    <property type="term" value="P:positive regulation of translation"/>
    <property type="evidence" value="ECO:0007669"/>
    <property type="project" value="UniProtKB-UniRule"/>
</dbReference>
<dbReference type="CDD" id="cd03699">
    <property type="entry name" value="EF4_II"/>
    <property type="match status" value="1"/>
</dbReference>
<dbReference type="CDD" id="cd16260">
    <property type="entry name" value="EF4_III"/>
    <property type="match status" value="1"/>
</dbReference>
<dbReference type="CDD" id="cd01890">
    <property type="entry name" value="LepA"/>
    <property type="match status" value="1"/>
</dbReference>
<dbReference type="CDD" id="cd03709">
    <property type="entry name" value="lepA_C"/>
    <property type="match status" value="1"/>
</dbReference>
<dbReference type="FunFam" id="3.30.70.240:FF:000005">
    <property type="entry name" value="Elongation factor 4"/>
    <property type="match status" value="1"/>
</dbReference>
<dbReference type="FunFam" id="3.40.50.300:FF:000078">
    <property type="entry name" value="Elongation factor 4"/>
    <property type="match status" value="1"/>
</dbReference>
<dbReference type="FunFam" id="2.40.30.10:FF:000015">
    <property type="entry name" value="Translation factor GUF1, mitochondrial"/>
    <property type="match status" value="1"/>
</dbReference>
<dbReference type="FunFam" id="3.30.70.2570:FF:000001">
    <property type="entry name" value="Translation factor GUF1, mitochondrial"/>
    <property type="match status" value="1"/>
</dbReference>
<dbReference type="FunFam" id="3.30.70.870:FF:000004">
    <property type="entry name" value="Translation factor GUF1, mitochondrial"/>
    <property type="match status" value="1"/>
</dbReference>
<dbReference type="Gene3D" id="3.30.70.240">
    <property type="match status" value="1"/>
</dbReference>
<dbReference type="Gene3D" id="3.30.70.2570">
    <property type="entry name" value="Elongation factor 4, C-terminal domain"/>
    <property type="match status" value="1"/>
</dbReference>
<dbReference type="Gene3D" id="3.30.70.870">
    <property type="entry name" value="Elongation Factor G (Translational Gtpase), domain 3"/>
    <property type="match status" value="1"/>
</dbReference>
<dbReference type="Gene3D" id="3.40.50.300">
    <property type="entry name" value="P-loop containing nucleotide triphosphate hydrolases"/>
    <property type="match status" value="1"/>
</dbReference>
<dbReference type="Gene3D" id="2.40.30.10">
    <property type="entry name" value="Translation factors"/>
    <property type="match status" value="1"/>
</dbReference>
<dbReference type="HAMAP" id="MF_00071">
    <property type="entry name" value="LepA"/>
    <property type="match status" value="1"/>
</dbReference>
<dbReference type="InterPro" id="IPR006297">
    <property type="entry name" value="EF-4"/>
</dbReference>
<dbReference type="InterPro" id="IPR035647">
    <property type="entry name" value="EFG_III/V"/>
</dbReference>
<dbReference type="InterPro" id="IPR000640">
    <property type="entry name" value="EFG_V-like"/>
</dbReference>
<dbReference type="InterPro" id="IPR004161">
    <property type="entry name" value="EFTu-like_2"/>
</dbReference>
<dbReference type="InterPro" id="IPR031157">
    <property type="entry name" value="G_TR_CS"/>
</dbReference>
<dbReference type="InterPro" id="IPR038363">
    <property type="entry name" value="LepA_C_sf"/>
</dbReference>
<dbReference type="InterPro" id="IPR013842">
    <property type="entry name" value="LepA_CTD"/>
</dbReference>
<dbReference type="InterPro" id="IPR035654">
    <property type="entry name" value="LepA_IV"/>
</dbReference>
<dbReference type="InterPro" id="IPR027417">
    <property type="entry name" value="P-loop_NTPase"/>
</dbReference>
<dbReference type="InterPro" id="IPR005225">
    <property type="entry name" value="Small_GTP-bd"/>
</dbReference>
<dbReference type="InterPro" id="IPR000795">
    <property type="entry name" value="T_Tr_GTP-bd_dom"/>
</dbReference>
<dbReference type="NCBIfam" id="TIGR01393">
    <property type="entry name" value="lepA"/>
    <property type="match status" value="1"/>
</dbReference>
<dbReference type="NCBIfam" id="TIGR00231">
    <property type="entry name" value="small_GTP"/>
    <property type="match status" value="1"/>
</dbReference>
<dbReference type="PANTHER" id="PTHR43512:SF4">
    <property type="entry name" value="TRANSLATION FACTOR GUF1 HOMOLOG, CHLOROPLASTIC"/>
    <property type="match status" value="1"/>
</dbReference>
<dbReference type="PANTHER" id="PTHR43512">
    <property type="entry name" value="TRANSLATION FACTOR GUF1-RELATED"/>
    <property type="match status" value="1"/>
</dbReference>
<dbReference type="Pfam" id="PF00679">
    <property type="entry name" value="EFG_C"/>
    <property type="match status" value="1"/>
</dbReference>
<dbReference type="Pfam" id="PF00009">
    <property type="entry name" value="GTP_EFTU"/>
    <property type="match status" value="1"/>
</dbReference>
<dbReference type="Pfam" id="PF03144">
    <property type="entry name" value="GTP_EFTU_D2"/>
    <property type="match status" value="1"/>
</dbReference>
<dbReference type="Pfam" id="PF06421">
    <property type="entry name" value="LepA_C"/>
    <property type="match status" value="1"/>
</dbReference>
<dbReference type="PRINTS" id="PR00315">
    <property type="entry name" value="ELONGATNFCT"/>
</dbReference>
<dbReference type="SUPFAM" id="SSF54980">
    <property type="entry name" value="EF-G C-terminal domain-like"/>
    <property type="match status" value="2"/>
</dbReference>
<dbReference type="SUPFAM" id="SSF52540">
    <property type="entry name" value="P-loop containing nucleoside triphosphate hydrolases"/>
    <property type="match status" value="1"/>
</dbReference>
<dbReference type="PROSITE" id="PS00301">
    <property type="entry name" value="G_TR_1"/>
    <property type="match status" value="1"/>
</dbReference>
<dbReference type="PROSITE" id="PS51722">
    <property type="entry name" value="G_TR_2"/>
    <property type="match status" value="1"/>
</dbReference>
<comment type="function">
    <text evidence="1">Required for accurate and efficient protein synthesis under certain stress conditions. May act as a fidelity factor of the translation reaction, by catalyzing a one-codon backward translocation of tRNAs on improperly translocated ribosomes. Back-translocation proceeds from a post-translocation (POST) complex to a pre-translocation (PRE) complex, thus giving elongation factor G a second chance to translocate the tRNAs correctly. Binds to ribosomes in a GTP-dependent manner.</text>
</comment>
<comment type="catalytic activity">
    <reaction evidence="1">
        <text>GTP + H2O = GDP + phosphate + H(+)</text>
        <dbReference type="Rhea" id="RHEA:19669"/>
        <dbReference type="ChEBI" id="CHEBI:15377"/>
        <dbReference type="ChEBI" id="CHEBI:15378"/>
        <dbReference type="ChEBI" id="CHEBI:37565"/>
        <dbReference type="ChEBI" id="CHEBI:43474"/>
        <dbReference type="ChEBI" id="CHEBI:58189"/>
        <dbReference type="EC" id="3.6.5.n1"/>
    </reaction>
</comment>
<comment type="subcellular location">
    <subcellularLocation>
        <location evidence="1">Cell inner membrane</location>
        <topology evidence="1">Peripheral membrane protein</topology>
        <orientation evidence="1">Cytoplasmic side</orientation>
    </subcellularLocation>
</comment>
<comment type="similarity">
    <text evidence="1">Belongs to the TRAFAC class translation factor GTPase superfamily. Classic translation factor GTPase family. LepA subfamily.</text>
</comment>
<feature type="chain" id="PRO_1000075137" description="Elongation factor 4">
    <location>
        <begin position="1"/>
        <end position="598"/>
    </location>
</feature>
<feature type="domain" description="tr-type G">
    <location>
        <begin position="2"/>
        <end position="184"/>
    </location>
</feature>
<feature type="binding site" evidence="1">
    <location>
        <begin position="14"/>
        <end position="19"/>
    </location>
    <ligand>
        <name>GTP</name>
        <dbReference type="ChEBI" id="CHEBI:37565"/>
    </ligand>
</feature>
<feature type="binding site" evidence="1">
    <location>
        <begin position="131"/>
        <end position="134"/>
    </location>
    <ligand>
        <name>GTP</name>
        <dbReference type="ChEBI" id="CHEBI:37565"/>
    </ligand>
</feature>
<gene>
    <name evidence="1" type="primary">lepA</name>
    <name type="ordered locus">HSM_0836</name>
</gene>
<name>LEPA_HISS2</name>
<proteinExistence type="inferred from homology"/>
<keyword id="KW-0997">Cell inner membrane</keyword>
<keyword id="KW-1003">Cell membrane</keyword>
<keyword id="KW-0342">GTP-binding</keyword>
<keyword id="KW-0378">Hydrolase</keyword>
<keyword id="KW-0472">Membrane</keyword>
<keyword id="KW-0547">Nucleotide-binding</keyword>
<keyword id="KW-0648">Protein biosynthesis</keyword>